<reference key="1">
    <citation type="submission" date="2008-08" db="EMBL/GenBank/DDBJ databases">
        <title>Complete sequence of Anaeromyxobacter sp. K.</title>
        <authorList>
            <consortium name="US DOE Joint Genome Institute"/>
            <person name="Lucas S."/>
            <person name="Copeland A."/>
            <person name="Lapidus A."/>
            <person name="Glavina del Rio T."/>
            <person name="Dalin E."/>
            <person name="Tice H."/>
            <person name="Bruce D."/>
            <person name="Goodwin L."/>
            <person name="Pitluck S."/>
            <person name="Saunders E."/>
            <person name="Brettin T."/>
            <person name="Detter J.C."/>
            <person name="Han C."/>
            <person name="Larimer F."/>
            <person name="Land M."/>
            <person name="Hauser L."/>
            <person name="Kyrpides N."/>
            <person name="Ovchinnikiva G."/>
            <person name="Beliaev A."/>
        </authorList>
    </citation>
    <scope>NUCLEOTIDE SEQUENCE [LARGE SCALE GENOMIC DNA]</scope>
    <source>
        <strain>K</strain>
    </source>
</reference>
<evidence type="ECO:0000255" key="1">
    <source>
        <dbReference type="HAMAP-Rule" id="MF_00156"/>
    </source>
</evidence>
<gene>
    <name evidence="1" type="primary">panB</name>
    <name type="ordered locus">AnaeK_3740</name>
</gene>
<protein>
    <recommendedName>
        <fullName evidence="1">3-methyl-2-oxobutanoate hydroxymethyltransferase</fullName>
        <ecNumber evidence="1">2.1.2.11</ecNumber>
    </recommendedName>
    <alternativeName>
        <fullName evidence="1">Ketopantoate hydroxymethyltransferase</fullName>
        <shortName evidence="1">KPHMT</shortName>
    </alternativeName>
</protein>
<dbReference type="EC" id="2.1.2.11" evidence="1"/>
<dbReference type="EMBL" id="CP001131">
    <property type="protein sequence ID" value="ACG74951.1"/>
    <property type="molecule type" value="Genomic_DNA"/>
</dbReference>
<dbReference type="RefSeq" id="WP_012527715.1">
    <property type="nucleotide sequence ID" value="NC_011145.1"/>
</dbReference>
<dbReference type="SMR" id="B4UDZ3"/>
<dbReference type="KEGG" id="ank:AnaeK_3740"/>
<dbReference type="HOGENOM" id="CLU_036645_1_0_7"/>
<dbReference type="OrthoDB" id="9781789at2"/>
<dbReference type="UniPathway" id="UPA00028">
    <property type="reaction ID" value="UER00003"/>
</dbReference>
<dbReference type="Proteomes" id="UP000001871">
    <property type="component" value="Chromosome"/>
</dbReference>
<dbReference type="GO" id="GO:0005737">
    <property type="term" value="C:cytoplasm"/>
    <property type="evidence" value="ECO:0007669"/>
    <property type="project" value="UniProtKB-SubCell"/>
</dbReference>
<dbReference type="GO" id="GO:0003864">
    <property type="term" value="F:3-methyl-2-oxobutanoate hydroxymethyltransferase activity"/>
    <property type="evidence" value="ECO:0007669"/>
    <property type="project" value="UniProtKB-UniRule"/>
</dbReference>
<dbReference type="GO" id="GO:0000287">
    <property type="term" value="F:magnesium ion binding"/>
    <property type="evidence" value="ECO:0007669"/>
    <property type="project" value="TreeGrafter"/>
</dbReference>
<dbReference type="GO" id="GO:0015940">
    <property type="term" value="P:pantothenate biosynthetic process"/>
    <property type="evidence" value="ECO:0007669"/>
    <property type="project" value="UniProtKB-UniRule"/>
</dbReference>
<dbReference type="CDD" id="cd06557">
    <property type="entry name" value="KPHMT-like"/>
    <property type="match status" value="1"/>
</dbReference>
<dbReference type="FunFam" id="3.20.20.60:FF:000003">
    <property type="entry name" value="3-methyl-2-oxobutanoate hydroxymethyltransferase"/>
    <property type="match status" value="1"/>
</dbReference>
<dbReference type="Gene3D" id="3.20.20.60">
    <property type="entry name" value="Phosphoenolpyruvate-binding domains"/>
    <property type="match status" value="1"/>
</dbReference>
<dbReference type="HAMAP" id="MF_00156">
    <property type="entry name" value="PanB"/>
    <property type="match status" value="1"/>
</dbReference>
<dbReference type="InterPro" id="IPR003700">
    <property type="entry name" value="Pantoate_hydroxy_MeTrfase"/>
</dbReference>
<dbReference type="InterPro" id="IPR015813">
    <property type="entry name" value="Pyrv/PenolPyrv_kinase-like_dom"/>
</dbReference>
<dbReference type="InterPro" id="IPR040442">
    <property type="entry name" value="Pyrv_kinase-like_dom_sf"/>
</dbReference>
<dbReference type="NCBIfam" id="TIGR00222">
    <property type="entry name" value="panB"/>
    <property type="match status" value="1"/>
</dbReference>
<dbReference type="NCBIfam" id="NF001452">
    <property type="entry name" value="PRK00311.1"/>
    <property type="match status" value="1"/>
</dbReference>
<dbReference type="PANTHER" id="PTHR20881">
    <property type="entry name" value="3-METHYL-2-OXOBUTANOATE HYDROXYMETHYLTRANSFERASE"/>
    <property type="match status" value="1"/>
</dbReference>
<dbReference type="PANTHER" id="PTHR20881:SF0">
    <property type="entry name" value="3-METHYL-2-OXOBUTANOATE HYDROXYMETHYLTRANSFERASE"/>
    <property type="match status" value="1"/>
</dbReference>
<dbReference type="Pfam" id="PF02548">
    <property type="entry name" value="Pantoate_transf"/>
    <property type="match status" value="1"/>
</dbReference>
<dbReference type="PIRSF" id="PIRSF000388">
    <property type="entry name" value="Pantoate_hydroxy_MeTrfase"/>
    <property type="match status" value="1"/>
</dbReference>
<dbReference type="SUPFAM" id="SSF51621">
    <property type="entry name" value="Phosphoenolpyruvate/pyruvate domain"/>
    <property type="match status" value="1"/>
</dbReference>
<keyword id="KW-0963">Cytoplasm</keyword>
<keyword id="KW-0460">Magnesium</keyword>
<keyword id="KW-0479">Metal-binding</keyword>
<keyword id="KW-0566">Pantothenate biosynthesis</keyword>
<keyword id="KW-0808">Transferase</keyword>
<name>PANB_ANASK</name>
<organism>
    <name type="scientific">Anaeromyxobacter sp. (strain K)</name>
    <dbReference type="NCBI Taxonomy" id="447217"/>
    <lineage>
        <taxon>Bacteria</taxon>
        <taxon>Pseudomonadati</taxon>
        <taxon>Myxococcota</taxon>
        <taxon>Myxococcia</taxon>
        <taxon>Myxococcales</taxon>
        <taxon>Cystobacterineae</taxon>
        <taxon>Anaeromyxobacteraceae</taxon>
        <taxon>Anaeromyxobacter</taxon>
    </lineage>
</organism>
<accession>B4UDZ3</accession>
<comment type="function">
    <text evidence="1">Catalyzes the reversible reaction in which hydroxymethyl group from 5,10-methylenetetrahydrofolate is transferred onto alpha-ketoisovalerate to form ketopantoate.</text>
</comment>
<comment type="catalytic activity">
    <reaction evidence="1">
        <text>3-methyl-2-oxobutanoate + (6R)-5,10-methylene-5,6,7,8-tetrahydrofolate + H2O = 2-dehydropantoate + (6S)-5,6,7,8-tetrahydrofolate</text>
        <dbReference type="Rhea" id="RHEA:11824"/>
        <dbReference type="ChEBI" id="CHEBI:11561"/>
        <dbReference type="ChEBI" id="CHEBI:11851"/>
        <dbReference type="ChEBI" id="CHEBI:15377"/>
        <dbReference type="ChEBI" id="CHEBI:15636"/>
        <dbReference type="ChEBI" id="CHEBI:57453"/>
        <dbReference type="EC" id="2.1.2.11"/>
    </reaction>
</comment>
<comment type="cofactor">
    <cofactor evidence="1">
        <name>Mg(2+)</name>
        <dbReference type="ChEBI" id="CHEBI:18420"/>
    </cofactor>
    <text evidence="1">Binds 1 Mg(2+) ion per subunit.</text>
</comment>
<comment type="pathway">
    <text evidence="1">Cofactor biosynthesis; (R)-pantothenate biosynthesis; (R)-pantoate from 3-methyl-2-oxobutanoate: step 1/2.</text>
</comment>
<comment type="subunit">
    <text evidence="1">Homodecamer; pentamer of dimers.</text>
</comment>
<comment type="subcellular location">
    <subcellularLocation>
        <location evidence="1">Cytoplasm</location>
    </subcellularLocation>
</comment>
<comment type="similarity">
    <text evidence="1">Belongs to the PanB family.</text>
</comment>
<proteinExistence type="inferred from homology"/>
<feature type="chain" id="PRO_1000096939" description="3-methyl-2-oxobutanoate hydroxymethyltransferase">
    <location>
        <begin position="1"/>
        <end position="306"/>
    </location>
</feature>
<feature type="active site" description="Proton acceptor" evidence="1">
    <location>
        <position position="195"/>
    </location>
</feature>
<feature type="binding site" evidence="1">
    <location>
        <begin position="53"/>
        <end position="54"/>
    </location>
    <ligand>
        <name>3-methyl-2-oxobutanoate</name>
        <dbReference type="ChEBI" id="CHEBI:11851"/>
    </ligand>
</feature>
<feature type="binding site" evidence="1">
    <location>
        <position position="53"/>
    </location>
    <ligand>
        <name>Mg(2+)</name>
        <dbReference type="ChEBI" id="CHEBI:18420"/>
    </ligand>
</feature>
<feature type="binding site" evidence="1">
    <location>
        <position position="96"/>
    </location>
    <ligand>
        <name>3-methyl-2-oxobutanoate</name>
        <dbReference type="ChEBI" id="CHEBI:11851"/>
    </ligand>
</feature>
<feature type="binding site" evidence="1">
    <location>
        <position position="96"/>
    </location>
    <ligand>
        <name>Mg(2+)</name>
        <dbReference type="ChEBI" id="CHEBI:18420"/>
    </ligand>
</feature>
<feature type="binding site" evidence="1">
    <location>
        <position position="126"/>
    </location>
    <ligand>
        <name>3-methyl-2-oxobutanoate</name>
        <dbReference type="ChEBI" id="CHEBI:11851"/>
    </ligand>
</feature>
<feature type="binding site" evidence="1">
    <location>
        <position position="128"/>
    </location>
    <ligand>
        <name>Mg(2+)</name>
        <dbReference type="ChEBI" id="CHEBI:18420"/>
    </ligand>
</feature>
<sequence length="306" mass="32293">MSSHPPAPRKHVTIHELRRMKESGERIAMVTAYDATAARLVAVAGVDAVLVGDSLGMAVQGHESTLPVTLDQMVYHSAMVRRGLARGDGRAHLVTDMSFGSYQASADEAVKAAMRLVAEGGAEAVKLEGGAEFGEVIRRIVRAGVPVMGHIGLTPQSVHKMGGYVVQGKDSEKAQQILRDARALEAAGCYALVLECIPSELARIVTSQLRVPTIGIGAGPHCDGQVLVLNDLLGLDASFTPRFVKRFGEVGAAVQDAVGAYVGEVKARAFPDDAHSFHSSSVRLVPVERHAEAAEEEPPDAIGAPI</sequence>